<proteinExistence type="evidence at protein level"/>
<evidence type="ECO:0000250" key="1">
    <source>
        <dbReference type="UniProtKB" id="P08865"/>
    </source>
</evidence>
<evidence type="ECO:0000255" key="2">
    <source>
        <dbReference type="HAMAP-Rule" id="MF_03016"/>
    </source>
</evidence>
<evidence type="ECO:0000256" key="3">
    <source>
        <dbReference type="SAM" id="MobiDB-lite"/>
    </source>
</evidence>
<evidence type="ECO:0000269" key="4">
    <source>
    </source>
</evidence>
<evidence type="ECO:0000269" key="5">
    <source>
    </source>
</evidence>
<evidence type="ECO:0000269" key="6">
    <source>
    </source>
</evidence>
<evidence type="ECO:0000269" key="7">
    <source>
    </source>
</evidence>
<evidence type="ECO:0000269" key="8">
    <source>
    </source>
</evidence>
<evidence type="ECO:0000269" key="9">
    <source>
    </source>
</evidence>
<evidence type="ECO:0000269" key="10">
    <source ref="7"/>
</evidence>
<evidence type="ECO:0000305" key="11"/>
<evidence type="ECO:0007744" key="12">
    <source>
        <dbReference type="PDB" id="7CPU"/>
    </source>
</evidence>
<evidence type="ECO:0007744" key="13">
    <source>
        <dbReference type="PDB" id="7CPV"/>
    </source>
</evidence>
<evidence type="ECO:0007744" key="14">
    <source>
    </source>
</evidence>
<protein>
    <recommendedName>
        <fullName evidence="2">Small ribosomal subunit protein uS2</fullName>
    </recommendedName>
    <alternativeName>
        <fullName evidence="2">37 kDa laminin receptor precursor</fullName>
        <shortName evidence="2">37LRP</shortName>
    </alternativeName>
    <alternativeName>
        <fullName>37 kDa oncofetal antigen</fullName>
    </alternativeName>
    <alternativeName>
        <fullName evidence="2">37/67 kDa laminin receptor</fullName>
        <shortName evidence="2">LRP/LR</shortName>
    </alternativeName>
    <alternativeName>
        <fullName evidence="11">40S ribosomal protein SA</fullName>
    </alternativeName>
    <alternativeName>
        <fullName evidence="2">67 kDa laminin receptor</fullName>
        <shortName evidence="2">67LR</shortName>
    </alternativeName>
    <alternativeName>
        <fullName evidence="2">Laminin receptor 1</fullName>
        <shortName evidence="2">LamR</shortName>
    </alternativeName>
    <alternativeName>
        <fullName evidence="2">Laminin-binding protein precursor p40</fullName>
        <shortName evidence="2">LBP/p40</shortName>
    </alternativeName>
    <alternativeName>
        <fullName>OFA/iLRP</fullName>
    </alternativeName>
</protein>
<feature type="initiator methionine" description="Removed" evidence="2 10">
    <location>
        <position position="1"/>
    </location>
</feature>
<feature type="chain" id="PRO_0000134359" description="Small ribosomal subunit protein uS2">
    <location>
        <begin position="2"/>
        <end position="295"/>
    </location>
</feature>
<feature type="repeat" description="[DE]-W-[ST] 1">
    <location>
        <begin position="230"/>
        <end position="232"/>
    </location>
</feature>
<feature type="repeat" description="[DE]-W-[ST] 2">
    <location>
        <begin position="247"/>
        <end position="249"/>
    </location>
</feature>
<feature type="repeat" description="[DE]-W-[ST] 3">
    <location>
        <begin position="266"/>
        <end position="268"/>
    </location>
</feature>
<feature type="repeat" description="[DE]-W-[ST] 4">
    <location>
        <begin position="275"/>
        <end position="277"/>
    </location>
</feature>
<feature type="repeat" description="[DE]-W-[ST] 5">
    <location>
        <begin position="293"/>
        <end position="295"/>
    </location>
</feature>
<feature type="region of interest" description="Interaction with PPP1R16B" evidence="2">
    <location>
        <begin position="54"/>
        <end position="113"/>
    </location>
</feature>
<feature type="region of interest" description="Laminin-binding" evidence="2">
    <location>
        <begin position="161"/>
        <end position="180"/>
    </location>
</feature>
<feature type="region of interest" description="Laminin-binding" evidence="2">
    <location>
        <begin position="205"/>
        <end position="229"/>
    </location>
</feature>
<feature type="region of interest" description="Laminin-binding" evidence="2">
    <location>
        <begin position="242"/>
        <end position="295"/>
    </location>
</feature>
<feature type="region of interest" description="Disordered" evidence="3">
    <location>
        <begin position="266"/>
        <end position="295"/>
    </location>
</feature>
<feature type="site" description="Cleavage; by ST3; site 1" evidence="2">
    <location>
        <begin position="115"/>
        <end position="116"/>
    </location>
</feature>
<feature type="site" description="Cleavage; by ST3; site 2" evidence="2">
    <location>
        <begin position="133"/>
        <end position="134"/>
    </location>
</feature>
<feature type="modified residue" description="N-acetylserine" evidence="2 10">
    <location>
        <position position="2"/>
    </location>
</feature>
<feature type="modified residue" description="Phosphoserine" evidence="1">
    <location>
        <position position="43"/>
    </location>
</feature>
<feature type="modified residue" description="N6-acetyllysine" evidence="1">
    <location>
        <position position="52"/>
    </location>
</feature>
<feature type="modified residue" description="N6-acetyllysine; alternate" evidence="14">
    <location>
        <position position="89"/>
    </location>
</feature>
<feature type="modified residue" description="Phosphothreonine" evidence="1">
    <location>
        <position position="97"/>
    </location>
</feature>
<feature type="cross-link" description="Glycyl lysine isopeptide (Lys-Gly) (interchain with G-Cter in SUMO2); alternate" evidence="1">
    <location>
        <position position="89"/>
    </location>
</feature>
<feature type="sequence conflict" description="In Ref. 1; AAA39413." evidence="11" ref="1">
    <original>F</original>
    <variation>L</variation>
    <location>
        <position position="18"/>
    </location>
</feature>
<feature type="sequence conflict" description="In Ref. 5; BAB27355." evidence="11" ref="5">
    <original>N</original>
    <variation>H</variation>
    <location>
        <position position="29"/>
    </location>
</feature>
<feature type="sequence conflict" description="In Ref. 1; AAA39413." evidence="11" ref="1">
    <original>R</original>
    <variation>A</variation>
    <location>
        <position position="155"/>
    </location>
</feature>
<feature type="sequence conflict" description="In Ref. 6; AAH92041." evidence="11" ref="6">
    <original>P</original>
    <variation>T</variation>
    <location>
        <position position="243"/>
    </location>
</feature>
<feature type="sequence conflict" description="In Ref. 5; BAC38701." evidence="11" ref="5">
    <original>S</original>
    <variation>Y</variation>
    <location>
        <position position="249"/>
    </location>
</feature>
<dbReference type="EMBL" id="J02870">
    <property type="protein sequence ID" value="AAA39413.1"/>
    <property type="molecule type" value="mRNA"/>
</dbReference>
<dbReference type="EMBL" id="X06406">
    <property type="protein sequence ID" value="CAA29696.1"/>
    <property type="molecule type" value="mRNA"/>
</dbReference>
<dbReference type="EMBL" id="AF140348">
    <property type="protein sequence ID" value="AAD26866.1"/>
    <property type="molecule type" value="mRNA"/>
</dbReference>
<dbReference type="EMBL" id="DQ360291">
    <property type="protein sequence ID" value="ABC95972.1"/>
    <property type="molecule type" value="Genomic_DNA"/>
</dbReference>
<dbReference type="EMBL" id="DQ360292">
    <property type="protein sequence ID" value="ABC95977.1"/>
    <property type="molecule type" value="Genomic_DNA"/>
</dbReference>
<dbReference type="EMBL" id="AK010423">
    <property type="protein sequence ID" value="BAB26926.1"/>
    <property type="molecule type" value="mRNA"/>
</dbReference>
<dbReference type="EMBL" id="AK010985">
    <property type="protein sequence ID" value="BAB27306.1"/>
    <property type="molecule type" value="mRNA"/>
</dbReference>
<dbReference type="EMBL" id="AK011041">
    <property type="protein sequence ID" value="BAB27353.1"/>
    <property type="molecule type" value="mRNA"/>
</dbReference>
<dbReference type="EMBL" id="AK011043">
    <property type="protein sequence ID" value="BAB27355.1"/>
    <property type="molecule type" value="mRNA"/>
</dbReference>
<dbReference type="EMBL" id="AK075778">
    <property type="protein sequence ID" value="BAC35952.1"/>
    <property type="molecule type" value="mRNA"/>
</dbReference>
<dbReference type="EMBL" id="AK075790">
    <property type="protein sequence ID" value="BAC35960.1"/>
    <property type="molecule type" value="mRNA"/>
</dbReference>
<dbReference type="EMBL" id="AK082935">
    <property type="protein sequence ID" value="BAC38701.1"/>
    <property type="molecule type" value="mRNA"/>
</dbReference>
<dbReference type="EMBL" id="AK088954">
    <property type="protein sequence ID" value="BAC40671.1"/>
    <property type="molecule type" value="mRNA"/>
</dbReference>
<dbReference type="EMBL" id="AK134224">
    <property type="protein sequence ID" value="BAE22057.1"/>
    <property type="molecule type" value="mRNA"/>
</dbReference>
<dbReference type="EMBL" id="AK135488">
    <property type="protein sequence ID" value="BAE22550.1"/>
    <property type="molecule type" value="mRNA"/>
</dbReference>
<dbReference type="EMBL" id="AK160551">
    <property type="protein sequence ID" value="BAE35867.1"/>
    <property type="molecule type" value="mRNA"/>
</dbReference>
<dbReference type="EMBL" id="AK160625">
    <property type="protein sequence ID" value="BAE35924.1"/>
    <property type="molecule type" value="mRNA"/>
</dbReference>
<dbReference type="EMBL" id="AK165219">
    <property type="protein sequence ID" value="BAE38083.1"/>
    <property type="molecule type" value="mRNA"/>
</dbReference>
<dbReference type="EMBL" id="AK166697">
    <property type="protein sequence ID" value="BAE38953.1"/>
    <property type="molecule type" value="mRNA"/>
</dbReference>
<dbReference type="EMBL" id="AK166874">
    <property type="protein sequence ID" value="BAE39085.1"/>
    <property type="molecule type" value="mRNA"/>
</dbReference>
<dbReference type="EMBL" id="AK167132">
    <property type="protein sequence ID" value="BAE39278.1"/>
    <property type="molecule type" value="mRNA"/>
</dbReference>
<dbReference type="EMBL" id="BC003829">
    <property type="protein sequence ID" value="AAH03829.1"/>
    <property type="molecule type" value="mRNA"/>
</dbReference>
<dbReference type="EMBL" id="BC037195">
    <property type="protein sequence ID" value="AAH37195.1"/>
    <property type="molecule type" value="mRNA"/>
</dbReference>
<dbReference type="EMBL" id="BC055886">
    <property type="protein sequence ID" value="AAH55886.1"/>
    <property type="molecule type" value="mRNA"/>
</dbReference>
<dbReference type="EMBL" id="BC081461">
    <property type="protein sequence ID" value="AAH81461.1"/>
    <property type="molecule type" value="mRNA"/>
</dbReference>
<dbReference type="EMBL" id="BC084677">
    <property type="protein sequence ID" value="AAH84677.1"/>
    <property type="molecule type" value="mRNA"/>
</dbReference>
<dbReference type="EMBL" id="BC092041">
    <property type="protein sequence ID" value="AAH92041.1"/>
    <property type="molecule type" value="mRNA"/>
</dbReference>
<dbReference type="EMBL" id="BC094902">
    <property type="protein sequence ID" value="AAH94902.1"/>
    <property type="molecule type" value="mRNA"/>
</dbReference>
<dbReference type="EMBL" id="BC099601">
    <property type="protein sequence ID" value="AAH99601.1"/>
    <property type="molecule type" value="mRNA"/>
</dbReference>
<dbReference type="EMBL" id="BC110285">
    <property type="protein sequence ID" value="AAI10286.1"/>
    <property type="molecule type" value="mRNA"/>
</dbReference>
<dbReference type="CCDS" id="CCDS23623.1"/>
<dbReference type="PIR" id="A29395">
    <property type="entry name" value="A29395"/>
</dbReference>
<dbReference type="RefSeq" id="NP_035159.3">
    <property type="nucleotide sequence ID" value="NM_011029.4"/>
</dbReference>
<dbReference type="PDB" id="7CPU">
    <property type="method" value="EM"/>
    <property type="resolution" value="2.82 A"/>
    <property type="chains" value="SA=1-295"/>
</dbReference>
<dbReference type="PDB" id="7CPV">
    <property type="method" value="EM"/>
    <property type="resolution" value="3.03 A"/>
    <property type="chains" value="SA=1-295"/>
</dbReference>
<dbReference type="PDB" id="7LS1">
    <property type="method" value="EM"/>
    <property type="resolution" value="3.30 A"/>
    <property type="chains" value="o2=1-295"/>
</dbReference>
<dbReference type="PDB" id="7LS2">
    <property type="method" value="EM"/>
    <property type="resolution" value="3.10 A"/>
    <property type="chains" value="o2=1-295"/>
</dbReference>
<dbReference type="PDBsum" id="7CPU"/>
<dbReference type="PDBsum" id="7CPV"/>
<dbReference type="PDBsum" id="7LS1"/>
<dbReference type="PDBsum" id="7LS2"/>
<dbReference type="EMDB" id="EMD-23500"/>
<dbReference type="EMDB" id="EMD-23501"/>
<dbReference type="EMDB" id="EMD-30432"/>
<dbReference type="EMDB" id="EMD-30433"/>
<dbReference type="SMR" id="P14206"/>
<dbReference type="BioGRID" id="201107">
    <property type="interactions" value="95"/>
</dbReference>
<dbReference type="ComplexPortal" id="CPX-5261">
    <property type="entry name" value="40S cytosolic small ribosomal subunit"/>
</dbReference>
<dbReference type="DIP" id="DIP-38089N"/>
<dbReference type="FunCoup" id="P14206">
    <property type="interactions" value="2163"/>
</dbReference>
<dbReference type="IntAct" id="P14206">
    <property type="interactions" value="16"/>
</dbReference>
<dbReference type="MINT" id="P14206"/>
<dbReference type="STRING" id="10090.ENSMUSP00000035105"/>
<dbReference type="ChEMBL" id="CHEMBL1075301"/>
<dbReference type="GlyGen" id="P14206">
    <property type="glycosylation" value="1 site, 1 O-linked glycan (1 site)"/>
</dbReference>
<dbReference type="iPTMnet" id="P14206"/>
<dbReference type="PhosphoSitePlus" id="P14206"/>
<dbReference type="SwissPalm" id="P14206"/>
<dbReference type="REPRODUCTION-2DPAGE" id="IPI00123604"/>
<dbReference type="REPRODUCTION-2DPAGE" id="P14206"/>
<dbReference type="CPTAC" id="non-CPTAC-4059"/>
<dbReference type="jPOST" id="P14206"/>
<dbReference type="PaxDb" id="10090-ENSMUSP00000035105"/>
<dbReference type="PeptideAtlas" id="P14206"/>
<dbReference type="ProteomicsDB" id="260999"/>
<dbReference type="Pumba" id="P14206"/>
<dbReference type="DNASU" id="16785"/>
<dbReference type="Ensembl" id="ENSMUST00000035105.7">
    <property type="protein sequence ID" value="ENSMUSP00000035105.6"/>
    <property type="gene ID" value="ENSMUSG00000032518.7"/>
</dbReference>
<dbReference type="Ensembl" id="ENSMUST00000217317.2">
    <property type="protein sequence ID" value="ENSMUSP00000148933.2"/>
    <property type="gene ID" value="ENSMUSG00000032518.7"/>
</dbReference>
<dbReference type="GeneID" id="16785"/>
<dbReference type="KEGG" id="mmu:16785"/>
<dbReference type="UCSC" id="uc009scd.2">
    <property type="organism name" value="mouse"/>
</dbReference>
<dbReference type="AGR" id="MGI:105381"/>
<dbReference type="CTD" id="3921"/>
<dbReference type="MGI" id="MGI:105381">
    <property type="gene designation" value="Rpsa"/>
</dbReference>
<dbReference type="VEuPathDB" id="HostDB:ENSMUSG00000032518"/>
<dbReference type="eggNOG" id="KOG0830">
    <property type="taxonomic scope" value="Eukaryota"/>
</dbReference>
<dbReference type="GeneTree" id="ENSGT00950000183099"/>
<dbReference type="HOGENOM" id="CLU_058171_1_0_1"/>
<dbReference type="InParanoid" id="P14206"/>
<dbReference type="OMA" id="VKNFFEP"/>
<dbReference type="OrthoDB" id="9593289at2759"/>
<dbReference type="PhylomeDB" id="P14206"/>
<dbReference type="TreeFam" id="TF300100"/>
<dbReference type="Reactome" id="R-MMU-156827">
    <property type="pathway name" value="L13a-mediated translational silencing of Ceruloplasmin expression"/>
</dbReference>
<dbReference type="Reactome" id="R-MMU-1799339">
    <property type="pathway name" value="SRP-dependent cotranslational protein targeting to membrane"/>
</dbReference>
<dbReference type="Reactome" id="R-MMU-6791226">
    <property type="pathway name" value="Major pathway of rRNA processing in the nucleolus and cytosol"/>
</dbReference>
<dbReference type="Reactome" id="R-MMU-72649">
    <property type="pathway name" value="Translation initiation complex formation"/>
</dbReference>
<dbReference type="Reactome" id="R-MMU-72689">
    <property type="pathway name" value="Formation of a pool of free 40S subunits"/>
</dbReference>
<dbReference type="Reactome" id="R-MMU-72695">
    <property type="pathway name" value="Formation of the ternary complex, and subsequently, the 43S complex"/>
</dbReference>
<dbReference type="Reactome" id="R-MMU-72702">
    <property type="pathway name" value="Ribosomal scanning and start codon recognition"/>
</dbReference>
<dbReference type="Reactome" id="R-MMU-72706">
    <property type="pathway name" value="GTP hydrolysis and joining of the 60S ribosomal subunit"/>
</dbReference>
<dbReference type="Reactome" id="R-MMU-975956">
    <property type="pathway name" value="Nonsense Mediated Decay (NMD) independent of the Exon Junction Complex (EJC)"/>
</dbReference>
<dbReference type="Reactome" id="R-MMU-975957">
    <property type="pathway name" value="Nonsense Mediated Decay (NMD) enhanced by the Exon Junction Complex (EJC)"/>
</dbReference>
<dbReference type="BioGRID-ORCS" id="16785">
    <property type="hits" value="23 hits in 76 CRISPR screens"/>
</dbReference>
<dbReference type="ChiTaRS" id="Rpsa">
    <property type="organism name" value="mouse"/>
</dbReference>
<dbReference type="PRO" id="PR:P14206"/>
<dbReference type="Proteomes" id="UP000000589">
    <property type="component" value="Chromosome 9"/>
</dbReference>
<dbReference type="RNAct" id="P14206">
    <property type="molecule type" value="protein"/>
</dbReference>
<dbReference type="Bgee" id="ENSMUSG00000032518">
    <property type="expression patterns" value="Expressed in ventricular zone and 78 other cell types or tissues"/>
</dbReference>
<dbReference type="ExpressionAtlas" id="P14206">
    <property type="expression patterns" value="baseline and differential"/>
</dbReference>
<dbReference type="GO" id="GO:0005737">
    <property type="term" value="C:cytoplasm"/>
    <property type="evidence" value="ECO:0000314"/>
    <property type="project" value="MGI"/>
</dbReference>
<dbReference type="GO" id="GO:0005829">
    <property type="term" value="C:cytosol"/>
    <property type="evidence" value="ECO:0000304"/>
    <property type="project" value="Reactome"/>
</dbReference>
<dbReference type="GO" id="GO:0022627">
    <property type="term" value="C:cytosolic small ribosomal subunit"/>
    <property type="evidence" value="ECO:0000314"/>
    <property type="project" value="UniProtKB"/>
</dbReference>
<dbReference type="GO" id="GO:0098978">
    <property type="term" value="C:glutamatergic synapse"/>
    <property type="evidence" value="ECO:0000314"/>
    <property type="project" value="SynGO"/>
</dbReference>
<dbReference type="GO" id="GO:0016020">
    <property type="term" value="C:membrane"/>
    <property type="evidence" value="ECO:0000266"/>
    <property type="project" value="MGI"/>
</dbReference>
<dbReference type="GO" id="GO:0005634">
    <property type="term" value="C:nucleus"/>
    <property type="evidence" value="ECO:0000314"/>
    <property type="project" value="MGI"/>
</dbReference>
<dbReference type="GO" id="GO:0005886">
    <property type="term" value="C:plasma membrane"/>
    <property type="evidence" value="ECO:0000250"/>
    <property type="project" value="UniProtKB"/>
</dbReference>
<dbReference type="GO" id="GO:0098794">
    <property type="term" value="C:postsynapse"/>
    <property type="evidence" value="ECO:0000303"/>
    <property type="project" value="SynGO"/>
</dbReference>
<dbReference type="GO" id="GO:0005840">
    <property type="term" value="C:ribosome"/>
    <property type="evidence" value="ECO:0000303"/>
    <property type="project" value="SynGO"/>
</dbReference>
<dbReference type="GO" id="GO:0015935">
    <property type="term" value="C:small ribosomal subunit"/>
    <property type="evidence" value="ECO:0000314"/>
    <property type="project" value="MGI"/>
</dbReference>
<dbReference type="GO" id="GO:0045202">
    <property type="term" value="C:synapse"/>
    <property type="evidence" value="ECO:0000314"/>
    <property type="project" value="SynGO"/>
</dbReference>
<dbReference type="GO" id="GO:0043236">
    <property type="term" value="F:laminin binding"/>
    <property type="evidence" value="ECO:0000314"/>
    <property type="project" value="MGI"/>
</dbReference>
<dbReference type="GO" id="GO:0005055">
    <property type="term" value="F:laminin receptor activity"/>
    <property type="evidence" value="ECO:0007669"/>
    <property type="project" value="UniProtKB-UniRule"/>
</dbReference>
<dbReference type="GO" id="GO:0003735">
    <property type="term" value="F:structural constituent of ribosome"/>
    <property type="evidence" value="ECO:0000314"/>
    <property type="project" value="UniProtKB"/>
</dbReference>
<dbReference type="GO" id="GO:0002181">
    <property type="term" value="P:cytoplasmic translation"/>
    <property type="evidence" value="ECO:0000303"/>
    <property type="project" value="ComplexPortal"/>
</dbReference>
<dbReference type="GO" id="GO:0000028">
    <property type="term" value="P:ribosomal small subunit assembly"/>
    <property type="evidence" value="ECO:0007669"/>
    <property type="project" value="UniProtKB-UniRule"/>
</dbReference>
<dbReference type="CDD" id="cd01425">
    <property type="entry name" value="RPS2"/>
    <property type="match status" value="1"/>
</dbReference>
<dbReference type="FunFam" id="3.40.50.10490:FF:000012">
    <property type="entry name" value="40S ribosomal protein SA"/>
    <property type="match status" value="1"/>
</dbReference>
<dbReference type="Gene3D" id="3.40.50.10490">
    <property type="entry name" value="Glucose-6-phosphate isomerase like protein, domain 1"/>
    <property type="match status" value="1"/>
</dbReference>
<dbReference type="HAMAP" id="MF_03015">
    <property type="entry name" value="Ribosomal_S2_euk"/>
    <property type="match status" value="1"/>
</dbReference>
<dbReference type="HAMAP" id="MF_03016">
    <property type="entry name" value="Ribosomal_S2_laminin_receptor"/>
    <property type="match status" value="1"/>
</dbReference>
<dbReference type="InterPro" id="IPR001865">
    <property type="entry name" value="Ribosomal_uS2"/>
</dbReference>
<dbReference type="InterPro" id="IPR032281">
    <property type="entry name" value="Ribosomal_uS2_C"/>
</dbReference>
<dbReference type="InterPro" id="IPR018130">
    <property type="entry name" value="Ribosomal_uS2_CS"/>
</dbReference>
<dbReference type="InterPro" id="IPR027498">
    <property type="entry name" value="Ribosomal_uS2_euk"/>
</dbReference>
<dbReference type="InterPro" id="IPR005707">
    <property type="entry name" value="Ribosomal_uS2_euk/arc"/>
</dbReference>
<dbReference type="InterPro" id="IPR023591">
    <property type="entry name" value="Ribosomal_uS2_flav_dom_sf"/>
</dbReference>
<dbReference type="InterPro" id="IPR027504">
    <property type="entry name" value="Ribosomal_uS2_vert"/>
</dbReference>
<dbReference type="NCBIfam" id="TIGR01012">
    <property type="entry name" value="uS2_euk_arch"/>
    <property type="match status" value="1"/>
</dbReference>
<dbReference type="PANTHER" id="PTHR11489">
    <property type="entry name" value="40S RIBOSOMAL PROTEIN SA"/>
    <property type="match status" value="1"/>
</dbReference>
<dbReference type="Pfam" id="PF16122">
    <property type="entry name" value="40S_SA_C"/>
    <property type="match status" value="1"/>
</dbReference>
<dbReference type="Pfam" id="PF00318">
    <property type="entry name" value="Ribosomal_S2"/>
    <property type="match status" value="2"/>
</dbReference>
<dbReference type="PRINTS" id="PR00395">
    <property type="entry name" value="RIBOSOMALS2"/>
</dbReference>
<dbReference type="SUPFAM" id="SSF52313">
    <property type="entry name" value="Ribosomal protein S2"/>
    <property type="match status" value="1"/>
</dbReference>
<dbReference type="PROSITE" id="PS00962">
    <property type="entry name" value="RIBOSOMAL_S2_1"/>
    <property type="match status" value="1"/>
</dbReference>
<dbReference type="PROSITE" id="PS00963">
    <property type="entry name" value="RIBOSOMAL_S2_2"/>
    <property type="match status" value="1"/>
</dbReference>
<gene>
    <name type="primary">Rpsa</name>
    <name type="synonym">Lamr1</name>
    <name type="synonym">P40-8</name>
</gene>
<organism>
    <name type="scientific">Mus musculus</name>
    <name type="common">Mouse</name>
    <dbReference type="NCBI Taxonomy" id="10090"/>
    <lineage>
        <taxon>Eukaryota</taxon>
        <taxon>Metazoa</taxon>
        <taxon>Chordata</taxon>
        <taxon>Craniata</taxon>
        <taxon>Vertebrata</taxon>
        <taxon>Euteleostomi</taxon>
        <taxon>Mammalia</taxon>
        <taxon>Eutheria</taxon>
        <taxon>Euarchontoglires</taxon>
        <taxon>Glires</taxon>
        <taxon>Rodentia</taxon>
        <taxon>Myomorpha</taxon>
        <taxon>Muroidea</taxon>
        <taxon>Muridae</taxon>
        <taxon>Murinae</taxon>
        <taxon>Mus</taxon>
        <taxon>Mus</taxon>
    </lineage>
</organism>
<keyword id="KW-0002">3D-structure</keyword>
<keyword id="KW-0007">Acetylation</keyword>
<keyword id="KW-1003">Cell membrane</keyword>
<keyword id="KW-0963">Cytoplasm</keyword>
<keyword id="KW-0903">Direct protein sequencing</keyword>
<keyword id="KW-1017">Isopeptide bond</keyword>
<keyword id="KW-0472">Membrane</keyword>
<keyword id="KW-0539">Nucleus</keyword>
<keyword id="KW-0597">Phosphoprotein</keyword>
<keyword id="KW-0675">Receptor</keyword>
<keyword id="KW-1185">Reference proteome</keyword>
<keyword id="KW-0677">Repeat</keyword>
<keyword id="KW-0687">Ribonucleoprotein</keyword>
<keyword id="KW-0689">Ribosomal protein</keyword>
<keyword id="KW-0832">Ubl conjugation</keyword>
<reference key="1">
    <citation type="journal article" date="1989" name="Biochemistry">
        <title>Evidence for a precursor of the high-affinity metastasis-associated murine laminin receptor.</title>
        <authorList>
            <person name="Rao C.N."/>
            <person name="Castronovo V."/>
            <person name="Schmitt M.C."/>
            <person name="Wewer U.M."/>
            <person name="Claysmith A.P."/>
            <person name="Liotta L.A."/>
            <person name="Sobel M.E."/>
        </authorList>
    </citation>
    <scope>NUCLEOTIDE SEQUENCE [MRNA]</scope>
</reference>
<reference key="2">
    <citation type="journal article" date="1988" name="Nucleic Acids Res.">
        <title>Nucleotide sequence for a major messenger RNA for a 40 kilodalton polypeptide that is under translational control in mouse tumor cells.</title>
        <authorList>
            <person name="Makrides S."/>
            <person name="Chitpatima S.T."/>
            <person name="Bandyopadhyay R."/>
            <person name="Brawerman G."/>
        </authorList>
    </citation>
    <scope>NUCLEOTIDE SEQUENCE [MRNA]</scope>
</reference>
<reference key="3">
    <citation type="journal article" date="1999" name="Anticancer Res.">
        <title>37 kilodalton oncofetal antigen protein and immature laminin receptor protein are identical, universal T-cell inducing immunogens on primary rodent and human cancers.</title>
        <authorList>
            <person name="Coggin J.H. Jr."/>
            <person name="Barsoum A.L."/>
            <person name="Rohrer J.W."/>
        </authorList>
    </citation>
    <scope>NUCLEOTIDE SEQUENCE [MRNA]</scope>
    <scope>FUNCTION</scope>
    <source>
        <strain>BALB/cJ</strain>
        <tissue>Fibrosarcoma</tissue>
    </source>
</reference>
<reference key="4">
    <citation type="submission" date="2006-01" db="EMBL/GenBank/DDBJ databases">
        <title>Genomic sequence analysis of laminin receptor loci in mice.</title>
        <authorList>
            <person name="Lee I.Y."/>
            <person name="Baxter D.H."/>
            <person name="Qin S."/>
            <person name="Hood L.E."/>
        </authorList>
    </citation>
    <scope>NUCLEOTIDE SEQUENCE [GENOMIC DNA]</scope>
    <source>
        <strain>CAST/EiJ</strain>
        <strain>SJL/J</strain>
    </source>
</reference>
<reference key="5">
    <citation type="journal article" date="2005" name="Science">
        <title>The transcriptional landscape of the mammalian genome.</title>
        <authorList>
            <person name="Carninci P."/>
            <person name="Kasukawa T."/>
            <person name="Katayama S."/>
            <person name="Gough J."/>
            <person name="Frith M.C."/>
            <person name="Maeda N."/>
            <person name="Oyama R."/>
            <person name="Ravasi T."/>
            <person name="Lenhard B."/>
            <person name="Wells C."/>
            <person name="Kodzius R."/>
            <person name="Shimokawa K."/>
            <person name="Bajic V.B."/>
            <person name="Brenner S.E."/>
            <person name="Batalov S."/>
            <person name="Forrest A.R."/>
            <person name="Zavolan M."/>
            <person name="Davis M.J."/>
            <person name="Wilming L.G."/>
            <person name="Aidinis V."/>
            <person name="Allen J.E."/>
            <person name="Ambesi-Impiombato A."/>
            <person name="Apweiler R."/>
            <person name="Aturaliya R.N."/>
            <person name="Bailey T.L."/>
            <person name="Bansal M."/>
            <person name="Baxter L."/>
            <person name="Beisel K.W."/>
            <person name="Bersano T."/>
            <person name="Bono H."/>
            <person name="Chalk A.M."/>
            <person name="Chiu K.P."/>
            <person name="Choudhary V."/>
            <person name="Christoffels A."/>
            <person name="Clutterbuck D.R."/>
            <person name="Crowe M.L."/>
            <person name="Dalla E."/>
            <person name="Dalrymple B.P."/>
            <person name="de Bono B."/>
            <person name="Della Gatta G."/>
            <person name="di Bernardo D."/>
            <person name="Down T."/>
            <person name="Engstrom P."/>
            <person name="Fagiolini M."/>
            <person name="Faulkner G."/>
            <person name="Fletcher C.F."/>
            <person name="Fukushima T."/>
            <person name="Furuno M."/>
            <person name="Futaki S."/>
            <person name="Gariboldi M."/>
            <person name="Georgii-Hemming P."/>
            <person name="Gingeras T.R."/>
            <person name="Gojobori T."/>
            <person name="Green R.E."/>
            <person name="Gustincich S."/>
            <person name="Harbers M."/>
            <person name="Hayashi Y."/>
            <person name="Hensch T.K."/>
            <person name="Hirokawa N."/>
            <person name="Hill D."/>
            <person name="Huminiecki L."/>
            <person name="Iacono M."/>
            <person name="Ikeo K."/>
            <person name="Iwama A."/>
            <person name="Ishikawa T."/>
            <person name="Jakt M."/>
            <person name="Kanapin A."/>
            <person name="Katoh M."/>
            <person name="Kawasawa Y."/>
            <person name="Kelso J."/>
            <person name="Kitamura H."/>
            <person name="Kitano H."/>
            <person name="Kollias G."/>
            <person name="Krishnan S.P."/>
            <person name="Kruger A."/>
            <person name="Kummerfeld S.K."/>
            <person name="Kurochkin I.V."/>
            <person name="Lareau L.F."/>
            <person name="Lazarevic D."/>
            <person name="Lipovich L."/>
            <person name="Liu J."/>
            <person name="Liuni S."/>
            <person name="McWilliam S."/>
            <person name="Madan Babu M."/>
            <person name="Madera M."/>
            <person name="Marchionni L."/>
            <person name="Matsuda H."/>
            <person name="Matsuzawa S."/>
            <person name="Miki H."/>
            <person name="Mignone F."/>
            <person name="Miyake S."/>
            <person name="Morris K."/>
            <person name="Mottagui-Tabar S."/>
            <person name="Mulder N."/>
            <person name="Nakano N."/>
            <person name="Nakauchi H."/>
            <person name="Ng P."/>
            <person name="Nilsson R."/>
            <person name="Nishiguchi S."/>
            <person name="Nishikawa S."/>
            <person name="Nori F."/>
            <person name="Ohara O."/>
            <person name="Okazaki Y."/>
            <person name="Orlando V."/>
            <person name="Pang K.C."/>
            <person name="Pavan W.J."/>
            <person name="Pavesi G."/>
            <person name="Pesole G."/>
            <person name="Petrovsky N."/>
            <person name="Piazza S."/>
            <person name="Reed J."/>
            <person name="Reid J.F."/>
            <person name="Ring B.Z."/>
            <person name="Ringwald M."/>
            <person name="Rost B."/>
            <person name="Ruan Y."/>
            <person name="Salzberg S.L."/>
            <person name="Sandelin A."/>
            <person name="Schneider C."/>
            <person name="Schoenbach C."/>
            <person name="Sekiguchi K."/>
            <person name="Semple C.A."/>
            <person name="Seno S."/>
            <person name="Sessa L."/>
            <person name="Sheng Y."/>
            <person name="Shibata Y."/>
            <person name="Shimada H."/>
            <person name="Shimada K."/>
            <person name="Silva D."/>
            <person name="Sinclair B."/>
            <person name="Sperling S."/>
            <person name="Stupka E."/>
            <person name="Sugiura K."/>
            <person name="Sultana R."/>
            <person name="Takenaka Y."/>
            <person name="Taki K."/>
            <person name="Tammoja K."/>
            <person name="Tan S.L."/>
            <person name="Tang S."/>
            <person name="Taylor M.S."/>
            <person name="Tegner J."/>
            <person name="Teichmann S.A."/>
            <person name="Ueda H.R."/>
            <person name="van Nimwegen E."/>
            <person name="Verardo R."/>
            <person name="Wei C.L."/>
            <person name="Yagi K."/>
            <person name="Yamanishi H."/>
            <person name="Zabarovsky E."/>
            <person name="Zhu S."/>
            <person name="Zimmer A."/>
            <person name="Hide W."/>
            <person name="Bult C."/>
            <person name="Grimmond S.M."/>
            <person name="Teasdale R.D."/>
            <person name="Liu E.T."/>
            <person name="Brusic V."/>
            <person name="Quackenbush J."/>
            <person name="Wahlestedt C."/>
            <person name="Mattick J.S."/>
            <person name="Hume D.A."/>
            <person name="Kai C."/>
            <person name="Sasaki D."/>
            <person name="Tomaru Y."/>
            <person name="Fukuda S."/>
            <person name="Kanamori-Katayama M."/>
            <person name="Suzuki M."/>
            <person name="Aoki J."/>
            <person name="Arakawa T."/>
            <person name="Iida J."/>
            <person name="Imamura K."/>
            <person name="Itoh M."/>
            <person name="Kato T."/>
            <person name="Kawaji H."/>
            <person name="Kawagashira N."/>
            <person name="Kawashima T."/>
            <person name="Kojima M."/>
            <person name="Kondo S."/>
            <person name="Konno H."/>
            <person name="Nakano K."/>
            <person name="Ninomiya N."/>
            <person name="Nishio T."/>
            <person name="Okada M."/>
            <person name="Plessy C."/>
            <person name="Shibata K."/>
            <person name="Shiraki T."/>
            <person name="Suzuki S."/>
            <person name="Tagami M."/>
            <person name="Waki K."/>
            <person name="Watahiki A."/>
            <person name="Okamura-Oho Y."/>
            <person name="Suzuki H."/>
            <person name="Kawai J."/>
            <person name="Hayashizaki Y."/>
        </authorList>
    </citation>
    <scope>NUCLEOTIDE SEQUENCE [LARGE SCALE MRNA]</scope>
    <source>
        <strain>C57BL/6J</strain>
        <strain>NOD</strain>
        <tissue>Liver</tissue>
        <tissue>Muellerian duct</tissue>
        <tissue>Pancreas</tissue>
        <tissue>Spleen</tissue>
        <tissue>Thymus</tissue>
    </source>
</reference>
<reference key="6">
    <citation type="journal article" date="2004" name="Genome Res.">
        <title>The status, quality, and expansion of the NIH full-length cDNA project: the Mammalian Gene Collection (MGC).</title>
        <authorList>
            <consortium name="The MGC Project Team"/>
        </authorList>
    </citation>
    <scope>NUCLEOTIDE SEQUENCE [LARGE SCALE MRNA]</scope>
    <source>
        <strain>C57BL/6J</strain>
        <strain>Czech II</strain>
        <strain>FVB/N</strain>
        <tissue>Brain</tissue>
        <tissue>Colon</tissue>
        <tissue>Eye</tissue>
        <tissue>Kidney</tissue>
        <tissue>Mammary gland</tissue>
        <tissue>Mammary tumor</tissue>
        <tissue>Pancreas</tissue>
    </source>
</reference>
<reference key="7">
    <citation type="submission" date="2006-03" db="UniProtKB">
        <authorList>
            <person name="Kanor S."/>
            <person name="Quadroni M."/>
            <person name="Bienvenut W.V."/>
        </authorList>
    </citation>
    <scope>PROTEIN SEQUENCE OF 2-10</scope>
    <scope>CLEAVAGE OF INITIATOR METHIONINE</scope>
    <scope>ACETYLATION AT SER-2</scope>
    <scope>IDENTIFICATION BY MASS SPECTROMETRY</scope>
    <source>
        <strain>C57BL/6J</strain>
        <tissue>Skeletal muscle</tissue>
    </source>
</reference>
<reference key="8">
    <citation type="journal article" date="1996" name="Biochem. Biophys. Res. Commun.">
        <title>Analysis of nuclear localization of laminin binding protein precursor p40 (LBP/p40).</title>
        <authorList>
            <person name="Sato M."/>
            <person name="Kinoshita K."/>
            <person name="Kaneda Y."/>
            <person name="Saeki Y."/>
            <person name="Iwamatsu A."/>
            <person name="Tanaka K."/>
        </authorList>
    </citation>
    <scope>PROTEIN SEQUENCE OF 18-40; 43-50; 90-100 AND 155-163</scope>
    <scope>SUBCELLULAR LOCATION</scope>
</reference>
<reference key="9">
    <citation type="submission" date="2007-07" db="UniProtKB">
        <authorList>
            <person name="Lubec G."/>
            <person name="Klug S."/>
            <person name="Yang J.W."/>
            <person name="Zigmond M."/>
        </authorList>
    </citation>
    <scope>PROTEIN SEQUENCE OF 64-80; 90-117 AND 129-155</scope>
    <scope>IDENTIFICATION BY MASS SPECTROMETRY</scope>
    <source>
        <tissue>Brain</tissue>
        <tissue>Hippocampus</tissue>
    </source>
</reference>
<reference key="10">
    <citation type="journal article" date="1983" name="Biochem. Biophys. Res. Commun.">
        <title>Isolation of a tumor cell laminin receptor.</title>
        <authorList>
            <person name="Rao N.C."/>
            <person name="Barsky S.H."/>
            <person name="Terranova V.P."/>
            <person name="Liotta L.A."/>
        </authorList>
    </citation>
    <scope>FUNCTION AS LAMININ RECEPTOR</scope>
    <scope>SUBCELLULAR LOCATION</scope>
</reference>
<reference key="11">
    <citation type="journal article" date="1983" name="EMBO J.">
        <title>Isolation of a laminin-binding protein from muscle cell membranes.</title>
        <authorList>
            <person name="Lesot H."/>
            <person name="Kuehl U."/>
            <person name="von der Mark K."/>
        </authorList>
    </citation>
    <scope>FUNCTION</scope>
    <scope>INTERACTION WITH LAMININ-1</scope>
</reference>
<reference key="12">
    <citation type="journal article" date="1983" name="J. Cell Biol.">
        <title>Isolation of a cell surface receptor protein for laminin from murine fibrosarcoma cells.</title>
        <authorList>
            <person name="Malinoff H.L."/>
            <person name="Wicha M.S."/>
        </authorList>
    </citation>
    <scope>FUNCTION</scope>
    <scope>INTERACTION WITH LAMININ-1</scope>
</reference>
<reference key="13">
    <citation type="journal article" date="1992" name="Proc. Natl. Acad. Sci. U.S.A.">
        <title>A 33-kDa polypeptide with homology to the laminin receptor: component of translation machinery.</title>
        <authorList>
            <person name="Auth D."/>
            <person name="Brawerman G."/>
        </authorList>
    </citation>
    <scope>FUNCTION IN RIBOSOME</scope>
    <scope>SUBCELLULAR LOCATION</scope>
</reference>
<reference key="14">
    <citation type="journal article" date="2001" name="EMBO J.">
        <title>The 37-kDa/67-kDa laminin receptor acts as the cell-surface receptor for the cellular prion protein.</title>
        <authorList>
            <person name="Gauczynski S."/>
            <person name="Peyrin J.-M."/>
            <person name="Haik S."/>
            <person name="Leucht C."/>
            <person name="Hundt C."/>
            <person name="Rieger R."/>
            <person name="Krasemann S."/>
            <person name="Deslys J.-P."/>
            <person name="Dormont D."/>
            <person name="Lasmezas C.I."/>
            <person name="Weiss S."/>
        </authorList>
    </citation>
    <scope>INTERACTION WITH PRNP</scope>
    <scope>SUBCELLULAR LOCATION</scope>
</reference>
<reference key="15">
    <citation type="journal article" date="2001" name="Exp. Cell Res.">
        <title>Midkine binds to 37-kDa laminin binding protein precursor, leading to nuclear transport of the complex.</title>
        <authorList>
            <person name="Salama R.H.M."/>
            <person name="Muramatsu H."/>
            <person name="Zou K."/>
            <person name="Inui T."/>
            <person name="Kimura T."/>
            <person name="Muramatsu T."/>
        </authorList>
    </citation>
    <scope>INTERACTION WITH MDK</scope>
    <scope>SUBCELLULAR LOCATION</scope>
</reference>
<reference key="16">
    <citation type="journal article" date="2005" name="Nat. Biotechnol.">
        <title>Immunoaffinity profiling of tyrosine phosphorylation in cancer cells.</title>
        <authorList>
            <person name="Rush J."/>
            <person name="Moritz A."/>
            <person name="Lee K.A."/>
            <person name="Guo A."/>
            <person name="Goss V.L."/>
            <person name="Spek E.J."/>
            <person name="Zhang H."/>
            <person name="Zha X.-M."/>
            <person name="Polakiewicz R.D."/>
            <person name="Comb M.J."/>
        </authorList>
    </citation>
    <scope>IDENTIFICATION BY MASS SPECTROMETRY [LARGE SCALE ANALYSIS]</scope>
</reference>
<reference key="17">
    <citation type="journal article" date="2008" name="Biochim. Biophys. Acta">
        <title>Subcellular localization of prion proteins and the 37 kDa/67 kDa laminin receptor fused to fluorescent proteins.</title>
        <authorList>
            <person name="Nikles D."/>
            <person name="Vana K."/>
            <person name="Gauczynski S."/>
            <person name="Knetsch H."/>
            <person name="Ludewigs H."/>
            <person name="Weiss S."/>
        </authorList>
    </citation>
    <scope>SUBCELLULAR LOCATION</scope>
</reference>
<reference key="18">
    <citation type="journal article" date="2010" name="Cell">
        <title>A tissue-specific atlas of mouse protein phosphorylation and expression.</title>
        <authorList>
            <person name="Huttlin E.L."/>
            <person name="Jedrychowski M.P."/>
            <person name="Elias J.E."/>
            <person name="Goswami T."/>
            <person name="Rad R."/>
            <person name="Beausoleil S.A."/>
            <person name="Villen J."/>
            <person name="Haas W."/>
            <person name="Sowa M.E."/>
            <person name="Gygi S.P."/>
        </authorList>
    </citation>
    <scope>IDENTIFICATION BY MASS SPECTROMETRY [LARGE SCALE ANALYSIS]</scope>
    <source>
        <tissue>Brain</tissue>
        <tissue>Brown adipose tissue</tissue>
        <tissue>Heart</tissue>
        <tissue>Kidney</tissue>
        <tissue>Liver</tissue>
        <tissue>Lung</tissue>
        <tissue>Pancreas</tissue>
        <tissue>Spleen</tissue>
        <tissue>Testis</tissue>
    </source>
</reference>
<reference key="19">
    <citation type="journal article" date="2013" name="Mol. Cell">
        <title>SIRT5-mediated lysine desuccinylation impacts diverse metabolic pathways.</title>
        <authorList>
            <person name="Park J."/>
            <person name="Chen Y."/>
            <person name="Tishkoff D.X."/>
            <person name="Peng C."/>
            <person name="Tan M."/>
            <person name="Dai L."/>
            <person name="Xie Z."/>
            <person name="Zhang Y."/>
            <person name="Zwaans B.M."/>
            <person name="Skinner M.E."/>
            <person name="Lombard D.B."/>
            <person name="Zhao Y."/>
        </authorList>
    </citation>
    <scope>ACETYLATION [LARGE SCALE ANALYSIS] AT LYS-89</scope>
    <scope>IDENTIFICATION BY MASS SPECTROMETRY [LARGE SCALE ANALYSIS]</scope>
    <source>
        <tissue>Embryonic fibroblast</tissue>
    </source>
</reference>
<reference evidence="12 13" key="20">
    <citation type="journal article" date="2022" name="Nature">
        <title>A male germ-cell-specific ribosome controls male fertility.</title>
        <authorList>
            <person name="Li H."/>
            <person name="Huo Y."/>
            <person name="He X."/>
            <person name="Yao L."/>
            <person name="Zhang H."/>
            <person name="Cui Y."/>
            <person name="Xiao H."/>
            <person name="Xie W."/>
            <person name="Zhang D."/>
            <person name="Wang Y."/>
            <person name="Zhang S."/>
            <person name="Tu H."/>
            <person name="Cheng Y."/>
            <person name="Guo Y."/>
            <person name="Cao X."/>
            <person name="Zhu Y."/>
            <person name="Jiang T."/>
            <person name="Guo X."/>
            <person name="Qin Y."/>
            <person name="Sha J."/>
        </authorList>
    </citation>
    <scope>STRUCTURE BY ELECTRON MICROSCOPY (3.03 ANGSTROMS) OF RIBOSOME</scope>
    <scope>SUBUNIT</scope>
    <scope>SUBCELLULAR LOCATION</scope>
</reference>
<sequence length="295" mass="32838">MSGALDVLQMKEEDVLKFLAAGTHLGGTNLDFQMEQYIYKRKSDGIYIINLKRTWEKLLLAARAIVAIENPADVSVISSRNTGQRAVLKFAAATGATPIAGRFTPGTFTNQIQAAFREPRLLVVTDPRADHQPLTEASYVNLPTIALCNTDSPLRYVDIAIPCNNKGAHSVGLMWWMLAREVLRMRGTISREHPWEVMPDLYFYRDPEEIEKEEQAAAEKAVTKEEFQGEWTAPAPEFTAAQPEVADWSEGVQVPSVPIQQFPTEDWSAQPATEDWSAAPTAQATEWVGATTEWS</sequence>
<accession>P14206</accession>
<accession>Q58E74</accession>
<accession>Q8BHL0</accession>
<accession>Q8BNL2</accession>
<accession>Q91V31</accession>
<accession>Q9CY13</accession>
<comment type="function">
    <text evidence="2 4 5 6 8 9">Required for the assembly and/or stability of the 40S ribosomal subunit. Required for the processing of the 20S rRNA-precursor to mature 18S rRNA in a late step of the maturation of 40S ribosomal subunits. Also functions as a cell surface receptor for laminin. Plays a role in cell adhesion to the basement membrane and in the consequent activation of signaling transduction pathways. May play a role in cell fate determination and tissue morphogenesis. Also acts as a receptor for several other ligands, including the pathogenic prion protein, viruses, and bacteria. Acts as a PPP1R16B-dependent substrate of PPP1CA (By similarity). Enables malignant tumor cells to penetrate laminin tissue and vessel barriers. Activates precursor thymic anti-OFA/iLRP specific cytotoxic T-cell. May induce CD8 T-suppressor cells secreting IL-10.</text>
</comment>
<comment type="subunit">
    <text evidence="2">Monomer (37LRP) and homodimer (67LR) (By similarity). Component of the small ribosomal subunit (PubMed:36517592). Mature ribosomes consist of a small (40S) and a large (60S) subunit. The 40S subunit contains about 33 different proteins and 1 molecule of RNA (18S) (PubMed:36517592). The 60S subunit contains about 49 different proteins and 3 molecules of RNA (28S, 5.8S and 5S) (PubMed:36517592). Interacts with RPS21 (By similarity). Interacts with several laminins including at least LAMB1. Interacts with MDK. Interacts with PRNP. The mature dimeric form interacts with PPP1R16B (via its fourth ankyrin repeat). Interacts with PPP1CA only in the presence of PPP1R16B (By similarity).</text>
</comment>
<comment type="subcellular location">
    <subcellularLocation>
        <location>Cell membrane</location>
    </subcellularLocation>
    <subcellularLocation>
        <location evidence="7">Cytoplasm</location>
    </subcellularLocation>
    <subcellularLocation>
        <location>Nucleus</location>
    </subcellularLocation>
    <text evidence="2">67LR is found at the surface of the plasma membrane, with its C-terminal laminin-binding domain accessible to extracellular ligands. 37LRP is found at the cell surface, in the cytoplasm and in the nucleus. Colocalizes with PPP1R16B in the cell membrane (By similarity). 37LRP shuttles to the nucleus upon midkine (MDK) binding.</text>
</comment>
<comment type="PTM">
    <text evidence="2">Acylated. Acylation may be a prerequisite for conversion of the monomeric 37 kDa laminin receptor precursor (37LRP) to the mature dimeric 67 kDa laminin receptor (67LR), and may provide a mechanism for membrane association.</text>
</comment>
<comment type="PTM">
    <text evidence="2">Cleaved by stromelysin-3 (ST3) at the cell surface. Cleavage by stromelysin-3 may be a mechanism to alter cell-extracellular matrix interactions.</text>
</comment>
<comment type="miscellaneous">
    <text>This protein appears to have acquired a second function as a laminin receptor specifically in the vertebrate lineage.</text>
</comment>
<comment type="miscellaneous">
    <text>It is thought that in vertebrates 37/67 kDa laminin receptor acquired a dual function during evolution. It developed from the ribosomal protein SA, playing an essential role in the protein biosynthesis lacking any laminin binding activity, to a cell surface receptor with laminin binding activity.</text>
</comment>
<comment type="similarity">
    <text evidence="2">Belongs to the universal ribosomal protein uS2 family.</text>
</comment>
<name>RSSA_MOUSE</name>